<organism>
    <name type="scientific">Shigella dysenteriae serotype 1 (strain Sd197)</name>
    <dbReference type="NCBI Taxonomy" id="300267"/>
    <lineage>
        <taxon>Bacteria</taxon>
        <taxon>Pseudomonadati</taxon>
        <taxon>Pseudomonadota</taxon>
        <taxon>Gammaproteobacteria</taxon>
        <taxon>Enterobacterales</taxon>
        <taxon>Enterobacteriaceae</taxon>
        <taxon>Shigella</taxon>
    </lineage>
</organism>
<feature type="chain" id="PRO_0000294118" description="Purine ribonucleoside efflux pump NepI">
    <location>
        <begin position="1"/>
        <end position="394"/>
    </location>
</feature>
<feature type="topological domain" description="Cytoplasmic" evidence="1">
    <location>
        <begin position="1"/>
        <end position="21"/>
    </location>
</feature>
<feature type="transmembrane region" description="Helical" evidence="1">
    <location>
        <begin position="22"/>
        <end position="42"/>
    </location>
</feature>
<feature type="topological domain" description="Periplasmic" evidence="1">
    <location>
        <begin position="43"/>
        <end position="54"/>
    </location>
</feature>
<feature type="transmembrane region" description="Helical" evidence="1">
    <location>
        <begin position="55"/>
        <end position="75"/>
    </location>
</feature>
<feature type="topological domain" description="Cytoplasmic" evidence="1">
    <location>
        <begin position="76"/>
        <end position="85"/>
    </location>
</feature>
<feature type="transmembrane region" description="Helical" evidence="1">
    <location>
        <begin position="86"/>
        <end position="106"/>
    </location>
</feature>
<feature type="topological domain" description="Periplasmic" evidence="1">
    <location>
        <position position="107"/>
    </location>
</feature>
<feature type="transmembrane region" description="Helical" evidence="1">
    <location>
        <begin position="108"/>
        <end position="128"/>
    </location>
</feature>
<feature type="topological domain" description="Cytoplasmic" evidence="1">
    <location>
        <begin position="129"/>
        <end position="147"/>
    </location>
</feature>
<feature type="transmembrane region" description="Helical" evidence="1">
    <location>
        <begin position="148"/>
        <end position="168"/>
    </location>
</feature>
<feature type="topological domain" description="Periplasmic" evidence="1">
    <location>
        <begin position="169"/>
        <end position="175"/>
    </location>
</feature>
<feature type="transmembrane region" description="Helical" evidence="1">
    <location>
        <begin position="176"/>
        <end position="196"/>
    </location>
</feature>
<feature type="topological domain" description="Cytoplasmic" evidence="1">
    <location>
        <begin position="197"/>
        <end position="215"/>
    </location>
</feature>
<feature type="transmembrane region" description="Helical" evidence="1">
    <location>
        <begin position="216"/>
        <end position="236"/>
    </location>
</feature>
<feature type="topological domain" description="Periplasmic" evidence="1">
    <location>
        <begin position="237"/>
        <end position="255"/>
    </location>
</feature>
<feature type="transmembrane region" description="Helical" evidence="1">
    <location>
        <begin position="256"/>
        <end position="276"/>
    </location>
</feature>
<feature type="topological domain" description="Cytoplasmic" evidence="1">
    <location>
        <begin position="277"/>
        <end position="281"/>
    </location>
</feature>
<feature type="transmembrane region" description="Helical" evidence="1">
    <location>
        <begin position="282"/>
        <end position="302"/>
    </location>
</feature>
<feature type="topological domain" description="Periplasmic" evidence="1">
    <location>
        <begin position="303"/>
        <end position="305"/>
    </location>
</feature>
<feature type="transmembrane region" description="Helical" evidence="1">
    <location>
        <begin position="306"/>
        <end position="326"/>
    </location>
</feature>
<feature type="topological domain" description="Cytoplasmic" evidence="1">
    <location>
        <begin position="327"/>
        <end position="343"/>
    </location>
</feature>
<feature type="transmembrane region" description="Helical" evidence="1">
    <location>
        <begin position="344"/>
        <end position="364"/>
    </location>
</feature>
<feature type="topological domain" description="Periplasmic" evidence="1">
    <location>
        <begin position="365"/>
        <end position="366"/>
    </location>
</feature>
<feature type="transmembrane region" description="Helical" evidence="1">
    <location>
        <begin position="367"/>
        <end position="387"/>
    </location>
</feature>
<feature type="topological domain" description="Cytoplasmic" evidence="1">
    <location>
        <begin position="388"/>
        <end position="394"/>
    </location>
</feature>
<evidence type="ECO:0000255" key="1">
    <source>
        <dbReference type="HAMAP-Rule" id="MF_01189"/>
    </source>
</evidence>
<evidence type="ECO:0000305" key="2"/>
<protein>
    <recommendedName>
        <fullName evidence="1">Purine ribonucleoside efflux pump NepI</fullName>
    </recommendedName>
</protein>
<sequence length="394" mass="41517">MSEFIAENRGADAITRPNWSAVFSVAFCVACLIIVEFLPVSLLTPMAQDLGISEGVAGQSVTVTAFVAMFASLFITQTIQATDRRYVVILFAVLLTISCLLVSFANSFSLLLIGRACLGLALGGFWAMSASLTMRLVPPRTVPKALSVIFGAVSIALVIAAPLGSFLGELIGWRNVFNAAAVMGVLCIFWIIKSLPSLPGKPSHQKQNTFRLLQRPGVMAGMIAIFMSFAGQFAFFTYIRPVYMNLAGFGVDGLTLVLLSFGIASFIGTSLSSFILKRSVKLALAGAPLILAVSALVLTLCGSDKIVATGVAIIWGLTFALVPVGWSTWSTRSLADQAEKAGSIQVAVIQLANTCGAAIGGYALDNIGLTSPLMLSGTLMLLTALLVTAKVKMK</sequence>
<reference key="1">
    <citation type="journal article" date="2005" name="Nucleic Acids Res.">
        <title>Genome dynamics and diversity of Shigella species, the etiologic agents of bacillary dysentery.</title>
        <authorList>
            <person name="Yang F."/>
            <person name="Yang J."/>
            <person name="Zhang X."/>
            <person name="Chen L."/>
            <person name="Jiang Y."/>
            <person name="Yan Y."/>
            <person name="Tang X."/>
            <person name="Wang J."/>
            <person name="Xiong Z."/>
            <person name="Dong J."/>
            <person name="Xue Y."/>
            <person name="Zhu Y."/>
            <person name="Xu X."/>
            <person name="Sun L."/>
            <person name="Chen S."/>
            <person name="Nie H."/>
            <person name="Peng J."/>
            <person name="Xu J."/>
            <person name="Wang Y."/>
            <person name="Yuan Z."/>
            <person name="Wen Y."/>
            <person name="Yao Z."/>
            <person name="Shen Y."/>
            <person name="Qiang B."/>
            <person name="Hou Y."/>
            <person name="Yu J."/>
            <person name="Jin Q."/>
        </authorList>
    </citation>
    <scope>NUCLEOTIDE SEQUENCE [LARGE SCALE GENOMIC DNA]</scope>
    <source>
        <strain>Sd197</strain>
    </source>
</reference>
<dbReference type="EMBL" id="CP000034">
    <property type="protein sequence ID" value="ABB64051.1"/>
    <property type="status" value="ALT_INIT"/>
    <property type="molecule type" value="Genomic_DNA"/>
</dbReference>
<dbReference type="RefSeq" id="WP_001288543.1">
    <property type="nucleotide sequence ID" value="NC_007606.1"/>
</dbReference>
<dbReference type="RefSeq" id="YP_405542.2">
    <property type="nucleotide sequence ID" value="NC_007606.1"/>
</dbReference>
<dbReference type="SMR" id="Q329F4"/>
<dbReference type="STRING" id="300267.SDY_4141"/>
<dbReference type="EnsemblBacteria" id="ABB64051">
    <property type="protein sequence ID" value="ABB64051"/>
    <property type="gene ID" value="SDY_4141"/>
</dbReference>
<dbReference type="KEGG" id="sdy:SDY_4141"/>
<dbReference type="PATRIC" id="fig|300267.13.peg.4868"/>
<dbReference type="HOGENOM" id="CLU_001265_61_1_6"/>
<dbReference type="Proteomes" id="UP000002716">
    <property type="component" value="Chromosome"/>
</dbReference>
<dbReference type="GO" id="GO:0005886">
    <property type="term" value="C:plasma membrane"/>
    <property type="evidence" value="ECO:0007669"/>
    <property type="project" value="UniProtKB-SubCell"/>
</dbReference>
<dbReference type="GO" id="GO:0015297">
    <property type="term" value="F:antiporter activity"/>
    <property type="evidence" value="ECO:0007669"/>
    <property type="project" value="UniProtKB-KW"/>
</dbReference>
<dbReference type="GO" id="GO:0015211">
    <property type="term" value="F:purine nucleoside transmembrane transporter activity"/>
    <property type="evidence" value="ECO:0007669"/>
    <property type="project" value="UniProtKB-UniRule"/>
</dbReference>
<dbReference type="CDD" id="cd17324">
    <property type="entry name" value="MFS_NepI_like"/>
    <property type="match status" value="1"/>
</dbReference>
<dbReference type="FunFam" id="1.20.1250.20:FF:000113">
    <property type="entry name" value="Purine ribonucleoside efflux pump NepI"/>
    <property type="match status" value="1"/>
</dbReference>
<dbReference type="Gene3D" id="1.20.1250.20">
    <property type="entry name" value="MFS general substrate transporter like domains"/>
    <property type="match status" value="1"/>
</dbReference>
<dbReference type="HAMAP" id="MF_01189">
    <property type="entry name" value="MFS_NepI"/>
    <property type="match status" value="1"/>
</dbReference>
<dbReference type="InterPro" id="IPR011701">
    <property type="entry name" value="MFS"/>
</dbReference>
<dbReference type="InterPro" id="IPR020846">
    <property type="entry name" value="MFS_dom"/>
</dbReference>
<dbReference type="InterPro" id="IPR050189">
    <property type="entry name" value="MFS_Efflux_Transporters"/>
</dbReference>
<dbReference type="InterPro" id="IPR023680">
    <property type="entry name" value="MFS_NepI"/>
</dbReference>
<dbReference type="InterPro" id="IPR036259">
    <property type="entry name" value="MFS_trans_sf"/>
</dbReference>
<dbReference type="NCBIfam" id="NF007578">
    <property type="entry name" value="PRK10213.1"/>
    <property type="match status" value="1"/>
</dbReference>
<dbReference type="PANTHER" id="PTHR43124">
    <property type="entry name" value="PURINE EFFLUX PUMP PBUE"/>
    <property type="match status" value="1"/>
</dbReference>
<dbReference type="PANTHER" id="PTHR43124:SF5">
    <property type="entry name" value="PURINE RIBONUCLEOSIDE EFFLUX PUMP NEPI"/>
    <property type="match status" value="1"/>
</dbReference>
<dbReference type="Pfam" id="PF07690">
    <property type="entry name" value="MFS_1"/>
    <property type="match status" value="1"/>
</dbReference>
<dbReference type="SUPFAM" id="SSF103473">
    <property type="entry name" value="MFS general substrate transporter"/>
    <property type="match status" value="1"/>
</dbReference>
<dbReference type="PROSITE" id="PS50850">
    <property type="entry name" value="MFS"/>
    <property type="match status" value="1"/>
</dbReference>
<comment type="function">
    <text evidence="1">Involved in the efflux of purine ribonucleosides, such as inosine and guanosine.</text>
</comment>
<comment type="catalytic activity">
    <reaction evidence="1">
        <text>inosine(in) + H(+)(out) = inosine(out) + H(+)(in)</text>
        <dbReference type="Rhea" id="RHEA:29211"/>
        <dbReference type="ChEBI" id="CHEBI:15378"/>
        <dbReference type="ChEBI" id="CHEBI:17596"/>
    </reaction>
    <physiologicalReaction direction="left-to-right" evidence="1">
        <dbReference type="Rhea" id="RHEA:29212"/>
    </physiologicalReaction>
</comment>
<comment type="catalytic activity">
    <reaction evidence="1">
        <text>guanosine(in) + H(+)(out) = guanosine(out) + H(+)(in)</text>
        <dbReference type="Rhea" id="RHEA:29583"/>
        <dbReference type="ChEBI" id="CHEBI:15378"/>
        <dbReference type="ChEBI" id="CHEBI:16750"/>
    </reaction>
    <physiologicalReaction direction="left-to-right" evidence="1">
        <dbReference type="Rhea" id="RHEA:29584"/>
    </physiologicalReaction>
</comment>
<comment type="subcellular location">
    <subcellularLocation>
        <location evidence="1">Cell inner membrane</location>
        <topology evidence="1">Multi-pass membrane protein</topology>
    </subcellularLocation>
</comment>
<comment type="similarity">
    <text evidence="1">Belongs to the major facilitator superfamily. DHA1 family. NepI (TC 2.A.1.2.26) subfamily.</text>
</comment>
<comment type="sequence caution" evidence="2">
    <conflict type="erroneous initiation">
        <sequence resource="EMBL-CDS" id="ABB64051"/>
    </conflict>
</comment>
<accession>Q329F4</accession>
<name>NEPI_SHIDS</name>
<gene>
    <name evidence="1" type="primary">nepI</name>
    <name type="ordered locus">SDY_4141</name>
</gene>
<keyword id="KW-0050">Antiport</keyword>
<keyword id="KW-0997">Cell inner membrane</keyword>
<keyword id="KW-1003">Cell membrane</keyword>
<keyword id="KW-0472">Membrane</keyword>
<keyword id="KW-1185">Reference proteome</keyword>
<keyword id="KW-0812">Transmembrane</keyword>
<keyword id="KW-1133">Transmembrane helix</keyword>
<keyword id="KW-0813">Transport</keyword>
<proteinExistence type="inferred from homology"/>